<comment type="function">
    <text evidence="4 5">Catalyzes the hydrolysis of cutin, a polyester that forms the structure of plant cuticle (PubMed:18658138). Shows esterase activity towards p-nitrophenol-linked aliphatic esters (pNP-aliphatic esters) (PubMed:18658138, PubMed:25545638). Also hydrolyzes the triglyceride triolein (PubMed:18658138). Capable of degrading the plastic poly(ethylene terephthalate) (PET), the most abundant polyester plastic in the world (PubMed:25545638).</text>
</comment>
<comment type="catalytic activity">
    <reaction evidence="4 5">
        <text>a butanoate ester + H2O = an aliphatic alcohol + butanoate + H(+)</text>
        <dbReference type="Rhea" id="RHEA:47348"/>
        <dbReference type="ChEBI" id="CHEBI:2571"/>
        <dbReference type="ChEBI" id="CHEBI:15377"/>
        <dbReference type="ChEBI" id="CHEBI:15378"/>
        <dbReference type="ChEBI" id="CHEBI:17968"/>
        <dbReference type="ChEBI" id="CHEBI:50477"/>
    </reaction>
    <physiologicalReaction direction="left-to-right" evidence="4 5">
        <dbReference type="Rhea" id="RHEA:47349"/>
    </physiologicalReaction>
</comment>
<comment type="catalytic activity">
    <reaction evidence="4">
        <text>cutin + H2O = cutin monomers.</text>
        <dbReference type="EC" id="3.1.1.74"/>
    </reaction>
</comment>
<comment type="catalytic activity">
    <reaction evidence="5">
        <text>(ethylene terephthalate)(n) + H2O = (ethylene terephthalate)(n-1) + 4-[(2-hydroxyethoxy)carbonyl]benzoate + H(+)</text>
        <dbReference type="Rhea" id="RHEA:49528"/>
        <dbReference type="Rhea" id="RHEA-COMP:12420"/>
        <dbReference type="Rhea" id="RHEA-COMP:12421"/>
        <dbReference type="ChEBI" id="CHEBI:15377"/>
        <dbReference type="ChEBI" id="CHEBI:15378"/>
        <dbReference type="ChEBI" id="CHEBI:131701"/>
        <dbReference type="ChEBI" id="CHEBI:131704"/>
        <dbReference type="EC" id="3.1.1.101"/>
    </reaction>
    <physiologicalReaction direction="left-to-right" evidence="5">
        <dbReference type="Rhea" id="RHEA:49529"/>
    </physiologicalReaction>
</comment>
<comment type="activity regulation">
    <text evidence="4 5">Activated by magnesium ions (PubMed:25545638). Activated by calcium ions (PubMed:25545638). Inhibited by the serine hydrolase inhibitor phenylmethanesulfonyl fluoride (PMSF) (PubMed:18658138).</text>
</comment>
<comment type="biophysicochemical properties">
    <phDependence>
        <text evidence="4">Optimum pH is 8.</text>
    </phDependence>
    <temperatureDependence>
        <text evidence="4">Optimum temperature is 60 degrees Celsius.</text>
    </temperatureDependence>
</comment>
<comment type="subcellular location">
    <subcellularLocation>
        <location evidence="2">Secreted</location>
    </subcellularLocation>
    <subcellularLocation>
        <location evidence="2">Periplasm</location>
    </subcellularLocation>
</comment>
<comment type="biotechnology">
    <text evidence="5">Has potential for application in biological recycling of plastic waste products.</text>
</comment>
<comment type="similarity">
    <text evidence="6">Belongs to the AB hydrolase superfamily.</text>
</comment>
<protein>
    <recommendedName>
        <fullName>Cutinase</fullName>
        <ecNumber evidence="4">3.1.1.74</ecNumber>
    </recommendedName>
    <alternativeName>
        <fullName evidence="6">Poly(ethylene terephthalate) hydrolase</fullName>
        <shortName evidence="6">PET hydrolase</shortName>
        <shortName evidence="6">PETase</shortName>
        <ecNumber evidence="5">3.1.1.101</ecNumber>
    </alternativeName>
</protein>
<reference key="1">
    <citation type="journal article" date="2007" name="J. Bacteriol.">
        <title>Genome sequence and analysis of the soil cellulolytic actinomycete Thermobifida fusca YX.</title>
        <authorList>
            <person name="Lykidis A."/>
            <person name="Mavromatis K."/>
            <person name="Ivanova N."/>
            <person name="Anderson I."/>
            <person name="Land M."/>
            <person name="DiBartolo G."/>
            <person name="Martinez M."/>
            <person name="Lapidus A."/>
            <person name="Lucas S."/>
            <person name="Copeland A."/>
            <person name="Richardson P."/>
            <person name="Wilson D.B."/>
            <person name="Kyrpides N."/>
        </authorList>
    </citation>
    <scope>NUCLEOTIDE SEQUENCE [LARGE SCALE GENOMIC DNA]</scope>
    <source>
        <strain>YX</strain>
    </source>
</reference>
<reference evidence="6" key="2">
    <citation type="journal article" date="2008" name="J. Biol. Chem.">
        <title>Identification and characterization of bacterial cutinase.</title>
        <authorList>
            <person name="Chen S."/>
            <person name="Tong X."/>
            <person name="Woodard R.W."/>
            <person name="Du G."/>
            <person name="Wu J."/>
            <person name="Chen J."/>
        </authorList>
    </citation>
    <scope>FUNCTION</scope>
    <scope>CATALYTIC ACTIVITY</scope>
    <scope>ACTIVITY REGULATION</scope>
    <scope>BIOPHYSICOCHEMICAL PROPERTIES</scope>
</reference>
<reference evidence="6" key="3">
    <citation type="journal article" date="2015" name="Biotechnol. J.">
        <title>Ca2+ and Mg2+ binding site engineering increases the degradation of polyethylene terephthalate films by polyester hydrolases from Thermobifida fusca.</title>
        <authorList>
            <person name="Then J."/>
            <person name="Wei R."/>
            <person name="Oeser T."/>
            <person name="Barth M."/>
            <person name="Belisario-Ferrari M.R."/>
            <person name="Schmidt J."/>
            <person name="Zimmermann W."/>
        </authorList>
    </citation>
    <scope>FUNCTION</scope>
    <scope>CATALYTIC ACTIVITY</scope>
    <scope>ACTIVITY REGULATION</scope>
    <scope>BIOTECHNOLOGY</scope>
</reference>
<feature type="signal peptide" evidence="7">
    <location>
        <begin position="1"/>
        <end position="40"/>
    </location>
</feature>
<feature type="chain" id="PRO_0000455610" description="Cutinase" evidence="3">
    <location>
        <begin position="41"/>
        <end position="319"/>
    </location>
</feature>
<feature type="active site" description="Nucleophile" evidence="7">
    <location>
        <position position="188"/>
    </location>
</feature>
<feature type="active site" description="Charge relay system" evidence="1">
    <location>
        <position position="234"/>
    </location>
</feature>
<feature type="active site" description="Charge relay system" evidence="1">
    <location>
        <position position="266"/>
    </location>
</feature>
<feature type="binding site" evidence="1">
    <location>
        <position position="118"/>
    </location>
    <ligand>
        <name>poly(ethylene terephthalate)</name>
        <dbReference type="ChEBI" id="CHEBI:131701"/>
    </ligand>
</feature>
<feature type="binding site" evidence="1">
    <location>
        <position position="189"/>
    </location>
    <ligand>
        <name>poly(ethylene terephthalate)</name>
        <dbReference type="ChEBI" id="CHEBI:131701"/>
    </ligand>
</feature>
<feature type="binding site" evidence="1">
    <location>
        <position position="213"/>
    </location>
    <ligand>
        <name>poly(ethylene terephthalate)</name>
        <dbReference type="ChEBI" id="CHEBI:131701"/>
    </ligand>
</feature>
<feature type="disulfide bond" evidence="1">
    <location>
        <begin position="299"/>
        <end position="317"/>
    </location>
</feature>
<evidence type="ECO:0000250" key="1">
    <source>
        <dbReference type="UniProtKB" id="A0A0K8P6T7"/>
    </source>
</evidence>
<evidence type="ECO:0000250" key="2">
    <source>
        <dbReference type="UniProtKB" id="G8GER6"/>
    </source>
</evidence>
<evidence type="ECO:0000255" key="3"/>
<evidence type="ECO:0000269" key="4">
    <source>
    </source>
</evidence>
<evidence type="ECO:0000269" key="5">
    <source>
    </source>
</evidence>
<evidence type="ECO:0000305" key="6"/>
<evidence type="ECO:0000305" key="7">
    <source>
    </source>
</evidence>
<evidence type="ECO:0000312" key="8">
    <source>
        <dbReference type="EMBL" id="AAZ54920.1"/>
    </source>
</evidence>
<accession>Q47RJ7</accession>
<keyword id="KW-1015">Disulfide bond</keyword>
<keyword id="KW-0378">Hydrolase</keyword>
<keyword id="KW-0574">Periplasm</keyword>
<keyword id="KW-0964">Secreted</keyword>
<keyword id="KW-0719">Serine esterase</keyword>
<keyword id="KW-0732">Signal</keyword>
<proteinExistence type="evidence at protein level"/>
<name>PETH1_THEFY</name>
<dbReference type="EC" id="3.1.1.74" evidence="4"/>
<dbReference type="EC" id="3.1.1.101" evidence="5"/>
<dbReference type="EMBL" id="CP000088">
    <property type="protein sequence ID" value="AAZ54920.1"/>
    <property type="molecule type" value="Genomic_DNA"/>
</dbReference>
<dbReference type="SMR" id="Q47RJ7"/>
<dbReference type="STRING" id="269800.Tfu_0882"/>
<dbReference type="ESTHER" id="thefu-q6a0i3">
    <property type="family name" value="Polyesterase-lipase-cutinase"/>
</dbReference>
<dbReference type="KEGG" id="tfu:Tfu_0882"/>
<dbReference type="eggNOG" id="COG4188">
    <property type="taxonomic scope" value="Bacteria"/>
</dbReference>
<dbReference type="HOGENOM" id="CLU_052605_1_0_11"/>
<dbReference type="BRENDA" id="3.1.1.3">
    <property type="organism ID" value="6298"/>
</dbReference>
<dbReference type="SABIO-RK" id="Q47RJ7"/>
<dbReference type="GO" id="GO:0005576">
    <property type="term" value="C:extracellular region"/>
    <property type="evidence" value="ECO:0007669"/>
    <property type="project" value="UniProtKB-SubCell"/>
</dbReference>
<dbReference type="GO" id="GO:0042597">
    <property type="term" value="C:periplasmic space"/>
    <property type="evidence" value="ECO:0007669"/>
    <property type="project" value="UniProtKB-SubCell"/>
</dbReference>
<dbReference type="GO" id="GO:0050525">
    <property type="term" value="F:cutinase activity"/>
    <property type="evidence" value="ECO:0000314"/>
    <property type="project" value="UniProtKB"/>
</dbReference>
<dbReference type="GO" id="GO:0004806">
    <property type="term" value="F:triacylglycerol lipase activity"/>
    <property type="evidence" value="ECO:0007669"/>
    <property type="project" value="UniProtKB-EC"/>
</dbReference>
<dbReference type="Gene3D" id="3.40.50.1820">
    <property type="entry name" value="alpha/beta hydrolase"/>
    <property type="match status" value="1"/>
</dbReference>
<dbReference type="InterPro" id="IPR029058">
    <property type="entry name" value="AB_hydrolase_fold"/>
</dbReference>
<dbReference type="InterPro" id="IPR050261">
    <property type="entry name" value="FrsA_esterase"/>
</dbReference>
<dbReference type="InterPro" id="IPR041127">
    <property type="entry name" value="PET_hydrolase/cutinase-like"/>
</dbReference>
<dbReference type="PANTHER" id="PTHR22946">
    <property type="entry name" value="DIENELACTONE HYDROLASE DOMAIN-CONTAINING PROTEIN-RELATED"/>
    <property type="match status" value="1"/>
</dbReference>
<dbReference type="PANTHER" id="PTHR22946:SF9">
    <property type="entry name" value="POLYKETIDE TRANSFERASE AF380"/>
    <property type="match status" value="1"/>
</dbReference>
<dbReference type="Pfam" id="PF12740">
    <property type="entry name" value="PETase"/>
    <property type="match status" value="1"/>
</dbReference>
<dbReference type="SUPFAM" id="SSF53474">
    <property type="entry name" value="alpha/beta-Hydrolases"/>
    <property type="match status" value="1"/>
</dbReference>
<sequence>MPPHAARPGPAQNRRGRAMAVITPRRERSSLLSRALRFTAAAATALVTAVSLAAPAHAANPYERGPNPTDALLEARSGPFSVSEERASRFGADGFGGGTIYYPRENNTYGAVAISPGYTGTQASVAWLGERIASHGFVVITIDTNTTLDQPDSRARQLNAALDYMINDASSAVRSRIDSSRLAVMGHSMGGGGTLRLASQRPDLKAAIPLTPWHLNKNWSSVRVPTLIIGADLDTIAPVLTHARPFYNSLPTSISKAYLELDGATHFAPNIPNKIIGKYSVAWLKRFVDNDTRYTQFLCPGPRDGLFGEVEEYRSTCPF</sequence>
<organism>
    <name type="scientific">Thermobifida fusca (strain YX)</name>
    <dbReference type="NCBI Taxonomy" id="269800"/>
    <lineage>
        <taxon>Bacteria</taxon>
        <taxon>Bacillati</taxon>
        <taxon>Actinomycetota</taxon>
        <taxon>Actinomycetes</taxon>
        <taxon>Streptosporangiales</taxon>
        <taxon>Nocardiopsidaceae</taxon>
        <taxon>Thermobifida</taxon>
    </lineage>
</organism>
<gene>
    <name evidence="8" type="ordered locus">Tfu_0882</name>
</gene>